<comment type="function">
    <text evidence="1">Probably functions as a manganese efflux pump.</text>
</comment>
<comment type="subcellular location">
    <subcellularLocation>
        <location evidence="1">Cell inner membrane</location>
        <topology evidence="1">Multi-pass membrane protein</topology>
    </subcellularLocation>
</comment>
<comment type="similarity">
    <text evidence="1">Belongs to the MntP (TC 9.B.29) family.</text>
</comment>
<gene>
    <name evidence="1" type="primary">mntP</name>
    <name type="synonym">yebN</name>
    <name type="ordered locus">EFER_1254</name>
</gene>
<keyword id="KW-0997">Cell inner membrane</keyword>
<keyword id="KW-1003">Cell membrane</keyword>
<keyword id="KW-0406">Ion transport</keyword>
<keyword id="KW-0464">Manganese</keyword>
<keyword id="KW-0472">Membrane</keyword>
<keyword id="KW-0812">Transmembrane</keyword>
<keyword id="KW-1133">Transmembrane helix</keyword>
<keyword id="KW-0813">Transport</keyword>
<name>MNTP_ESCF3</name>
<proteinExistence type="inferred from homology"/>
<accession>B7LPM5</accession>
<reference key="1">
    <citation type="journal article" date="2009" name="PLoS Genet.">
        <title>Organised genome dynamics in the Escherichia coli species results in highly diverse adaptive paths.</title>
        <authorList>
            <person name="Touchon M."/>
            <person name="Hoede C."/>
            <person name="Tenaillon O."/>
            <person name="Barbe V."/>
            <person name="Baeriswyl S."/>
            <person name="Bidet P."/>
            <person name="Bingen E."/>
            <person name="Bonacorsi S."/>
            <person name="Bouchier C."/>
            <person name="Bouvet O."/>
            <person name="Calteau A."/>
            <person name="Chiapello H."/>
            <person name="Clermont O."/>
            <person name="Cruveiller S."/>
            <person name="Danchin A."/>
            <person name="Diard M."/>
            <person name="Dossat C."/>
            <person name="Karoui M.E."/>
            <person name="Frapy E."/>
            <person name="Garry L."/>
            <person name="Ghigo J.M."/>
            <person name="Gilles A.M."/>
            <person name="Johnson J."/>
            <person name="Le Bouguenec C."/>
            <person name="Lescat M."/>
            <person name="Mangenot S."/>
            <person name="Martinez-Jehanne V."/>
            <person name="Matic I."/>
            <person name="Nassif X."/>
            <person name="Oztas S."/>
            <person name="Petit M.A."/>
            <person name="Pichon C."/>
            <person name="Rouy Z."/>
            <person name="Ruf C.S."/>
            <person name="Schneider D."/>
            <person name="Tourret J."/>
            <person name="Vacherie B."/>
            <person name="Vallenet D."/>
            <person name="Medigue C."/>
            <person name="Rocha E.P.C."/>
            <person name="Denamur E."/>
        </authorList>
    </citation>
    <scope>NUCLEOTIDE SEQUENCE [LARGE SCALE GENOMIC DNA]</scope>
    <source>
        <strain>ATCC 35469 / DSM 13698 / BCRC 15582 / CCUG 18766 / IAM 14443 / JCM 21226 / LMG 7866 / NBRC 102419 / NCTC 12128 / CDC 0568-73</strain>
    </source>
</reference>
<organism>
    <name type="scientific">Escherichia fergusonii (strain ATCC 35469 / DSM 13698 / CCUG 18766 / IAM 14443 / JCM 21226 / LMG 7866 / NBRC 102419 / NCTC 12128 / CDC 0568-73)</name>
    <dbReference type="NCBI Taxonomy" id="585054"/>
    <lineage>
        <taxon>Bacteria</taxon>
        <taxon>Pseudomonadati</taxon>
        <taxon>Pseudomonadota</taxon>
        <taxon>Gammaproteobacteria</taxon>
        <taxon>Enterobacterales</taxon>
        <taxon>Enterobacteriaceae</taxon>
        <taxon>Escherichia</taxon>
    </lineage>
</organism>
<feature type="chain" id="PRO_1000200031" description="Probable manganese efflux pump MntP">
    <location>
        <begin position="1"/>
        <end position="188"/>
    </location>
</feature>
<feature type="transmembrane region" description="Helical" evidence="1">
    <location>
        <begin position="3"/>
        <end position="23"/>
    </location>
</feature>
<feature type="transmembrane region" description="Helical" evidence="1">
    <location>
        <begin position="66"/>
        <end position="86"/>
    </location>
</feature>
<feature type="transmembrane region" description="Helical" evidence="1">
    <location>
        <begin position="106"/>
        <end position="128"/>
    </location>
</feature>
<feature type="transmembrane region" description="Helical" evidence="1">
    <location>
        <begin position="143"/>
        <end position="163"/>
    </location>
</feature>
<feature type="transmembrane region" description="Helical" evidence="1">
    <location>
        <begin position="168"/>
        <end position="188"/>
    </location>
</feature>
<protein>
    <recommendedName>
        <fullName evidence="1">Probable manganese efflux pump MntP</fullName>
    </recommendedName>
</protein>
<dbReference type="EMBL" id="CU928158">
    <property type="protein sequence ID" value="CAQ88778.1"/>
    <property type="molecule type" value="Genomic_DNA"/>
</dbReference>
<dbReference type="RefSeq" id="WP_002431582.1">
    <property type="nucleotide sequence ID" value="NC_011740.1"/>
</dbReference>
<dbReference type="GeneID" id="75057699"/>
<dbReference type="KEGG" id="efe:EFER_1254"/>
<dbReference type="HOGENOM" id="CLU_096410_0_0_6"/>
<dbReference type="OrthoDB" id="9811590at2"/>
<dbReference type="Proteomes" id="UP000000745">
    <property type="component" value="Chromosome"/>
</dbReference>
<dbReference type="GO" id="GO:0005886">
    <property type="term" value="C:plasma membrane"/>
    <property type="evidence" value="ECO:0007669"/>
    <property type="project" value="UniProtKB-SubCell"/>
</dbReference>
<dbReference type="GO" id="GO:0005384">
    <property type="term" value="F:manganese ion transmembrane transporter activity"/>
    <property type="evidence" value="ECO:0007669"/>
    <property type="project" value="UniProtKB-UniRule"/>
</dbReference>
<dbReference type="HAMAP" id="MF_01521">
    <property type="entry name" value="MntP_pump"/>
    <property type="match status" value="1"/>
</dbReference>
<dbReference type="InterPro" id="IPR003810">
    <property type="entry name" value="Mntp/YtaF"/>
</dbReference>
<dbReference type="InterPro" id="IPR022929">
    <property type="entry name" value="Put_MntP"/>
</dbReference>
<dbReference type="NCBIfam" id="NF008546">
    <property type="entry name" value="PRK11469.1"/>
    <property type="match status" value="1"/>
</dbReference>
<dbReference type="PANTHER" id="PTHR35529">
    <property type="entry name" value="MANGANESE EFFLUX PUMP MNTP-RELATED"/>
    <property type="match status" value="1"/>
</dbReference>
<dbReference type="PANTHER" id="PTHR35529:SF1">
    <property type="entry name" value="MANGANESE EFFLUX PUMP MNTP-RELATED"/>
    <property type="match status" value="1"/>
</dbReference>
<dbReference type="Pfam" id="PF02659">
    <property type="entry name" value="Mntp"/>
    <property type="match status" value="1"/>
</dbReference>
<sequence>MNITATVLLAFGMSMDAFAASIGKGATLHKPKFSEALRTGLIFGAVETLTPLIGWGMGMLASRFVLEWNHWIAFVLLIFLGGRMIIEGIRGGDDEDEEPRRRHGFWLLVTTAIATSLDAMAVGVGLAFLQVNIIATALAIGCATLIMSTLGMMVGRFIGPILGKKAEILGGLVLIGIGVQILWTHFHG</sequence>
<evidence type="ECO:0000255" key="1">
    <source>
        <dbReference type="HAMAP-Rule" id="MF_01521"/>
    </source>
</evidence>